<reference key="1">
    <citation type="journal article" date="2013" name="BMC Plant Biol.">
        <title>Transcriptome resources and functional characterization of monoterpene synthases for two host species of the mountain pine beetle, lodgepole pine (Pinus contorta) and jack pine (Pinus banksiana).</title>
        <authorList>
            <person name="Hall D.E."/>
            <person name="Yuen M.M.S."/>
            <person name="Jancsik S."/>
            <person name="Quesada A.L."/>
            <person name="Dullat H.K."/>
            <person name="Li M."/>
            <person name="Henderson H."/>
            <person name="Arango-Velez A."/>
            <person name="Liao N.Y."/>
            <person name="Docking R.T."/>
            <person name="Chan S.K."/>
            <person name="Cooke J.E.K."/>
            <person name="Breuil C."/>
            <person name="Jones S.J.M."/>
            <person name="Keeling C.I."/>
            <person name="Bohlmann J."/>
        </authorList>
    </citation>
    <scope>NUCLEOTIDE SEQUENCE [MRNA]</scope>
    <scope>FUNCTION</scope>
    <scope>CATALYTIC ACTIVITY</scope>
    <scope>PATHWAY</scope>
</reference>
<evidence type="ECO:0000250" key="1">
    <source>
        <dbReference type="UniProtKB" id="A0A1C9J6A7"/>
    </source>
</evidence>
<evidence type="ECO:0000250" key="2">
    <source>
        <dbReference type="UniProtKB" id="Q40577"/>
    </source>
</evidence>
<evidence type="ECO:0000255" key="3"/>
<evidence type="ECO:0000269" key="4">
    <source>
    </source>
</evidence>
<evidence type="ECO:0000303" key="5">
    <source>
    </source>
</evidence>
<evidence type="ECO:0000305" key="6"/>
<accession>R9QMW7</accession>
<keyword id="KW-0150">Chloroplast</keyword>
<keyword id="KW-0456">Lyase</keyword>
<keyword id="KW-0460">Magnesium</keyword>
<keyword id="KW-0479">Metal-binding</keyword>
<keyword id="KW-0934">Plastid</keyword>
<keyword id="KW-0809">Transit peptide</keyword>
<feature type="transit peptide" description="Chloroplast" evidence="3">
    <location>
        <begin position="1"/>
        <end position="49"/>
    </location>
</feature>
<feature type="chain" id="PRO_0000455014" description="(-)-beta-phellandrene synthase 1, chloroplastic">
    <location>
        <begin position="50"/>
        <end position="621"/>
    </location>
</feature>
<feature type="short sequence motif" description="DDXXD motif" evidence="6">
    <location>
        <begin position="372"/>
        <end position="376"/>
    </location>
</feature>
<feature type="binding site" evidence="2">
    <location>
        <position position="372"/>
    </location>
    <ligand>
        <name>Mg(2+)</name>
        <dbReference type="ChEBI" id="CHEBI:18420"/>
        <label>1</label>
    </ligand>
</feature>
<feature type="binding site" evidence="2">
    <location>
        <position position="372"/>
    </location>
    <ligand>
        <name>Mg(2+)</name>
        <dbReference type="ChEBI" id="CHEBI:18420"/>
        <label>2</label>
    </ligand>
</feature>
<feature type="binding site" evidence="2">
    <location>
        <position position="376"/>
    </location>
    <ligand>
        <name>Mg(2+)</name>
        <dbReference type="ChEBI" id="CHEBI:18420"/>
        <label>1</label>
    </ligand>
</feature>
<feature type="binding site" evidence="2">
    <location>
        <position position="376"/>
    </location>
    <ligand>
        <name>Mg(2+)</name>
        <dbReference type="ChEBI" id="CHEBI:18420"/>
        <label>2</label>
    </ligand>
</feature>
<feature type="binding site" evidence="2">
    <location>
        <position position="524"/>
    </location>
    <ligand>
        <name>Mg(2+)</name>
        <dbReference type="ChEBI" id="CHEBI:18420"/>
        <label>3</label>
    </ligand>
</feature>
<sequence length="621" mass="71559">MALALVSVAPLVSMRRSLFSSPYELKSIDKTIPNLVMCRKRMLGRPSIRVSSTASVSNDDGVRRRVGDYRYNHWDEDLIDSLATSYEAPSYLKRADTLVEAIKDRFNSMGVDDGERMSPLTDLYQRLWMVDSVERLGIDRHFQNEIKSALDYVFSYWKEKGIGRGRQSAVTDLNSTALGLRTLRLHGYPVSSDVLENFKDHNGQFTCSGIQTEGEIRGVLNLFRASLIAFPGEKVMEEAEIFSTMYLKHALQKIAVSSLSQEIEYLLEYGWHTNPPRLEARMYMEVFPQDTIYEQKLVELAKVEFNIFHSLQKRELQSLTRWWKHYGFPQLSFTRHIHVEYYTFGSCIATDPKQSAFRLCFAKMSYFVTVLDDIYDTYGTMEELELFTAAIKRWDPSVVDCLPEYMKGVYMAVYDTVNEMAKEAEKVQGRDTLNYVRQAWELYIDAYMPEAKWISSGYLPTFQEYLDNSKISFGTRITILQPILTLGEPLPHEILQEIDFPAKFNDLISVILRLKGDTRCYKADRARGEEASSVSCYMKDNAGITEEDAIHCINDMVNNLLKELNWELLKPDSNVPISCRKAAFDICRIFHHGYKYRDGYGDATIEVKNLVKRTVLEPVPL</sequence>
<proteinExistence type="evidence at protein level"/>
<gene>
    <name evidence="5" type="primary">TPS-(-)Bphell1</name>
</gene>
<organism>
    <name type="scientific">Pinus banksiana</name>
    <name type="common">Jack pine</name>
    <name type="synonym">Pinus divaricata</name>
    <dbReference type="NCBI Taxonomy" id="3353"/>
    <lineage>
        <taxon>Eukaryota</taxon>
        <taxon>Viridiplantae</taxon>
        <taxon>Streptophyta</taxon>
        <taxon>Embryophyta</taxon>
        <taxon>Tracheophyta</taxon>
        <taxon>Spermatophyta</taxon>
        <taxon>Pinopsida</taxon>
        <taxon>Pinidae</taxon>
        <taxon>Conifers I</taxon>
        <taxon>Pinales</taxon>
        <taxon>Pinaceae</taxon>
        <taxon>Pinus</taxon>
        <taxon>Pinus subgen. Pinus</taxon>
    </lineage>
</organism>
<dbReference type="EC" id="4.2.3.52" evidence="4"/>
<dbReference type="EMBL" id="JQ240302">
    <property type="protein sequence ID" value="AFU73854.1"/>
    <property type="molecule type" value="mRNA"/>
</dbReference>
<dbReference type="SMR" id="R9QMW7"/>
<dbReference type="BRENDA" id="4.2.3.52">
    <property type="organism ID" value="4842"/>
</dbReference>
<dbReference type="UniPathway" id="UPA00213"/>
<dbReference type="UniPathway" id="UPA00924"/>
<dbReference type="GO" id="GO:0009507">
    <property type="term" value="C:chloroplast"/>
    <property type="evidence" value="ECO:0007669"/>
    <property type="project" value="UniProtKB-SubCell"/>
</dbReference>
<dbReference type="GO" id="GO:0000287">
    <property type="term" value="F:magnesium ion binding"/>
    <property type="evidence" value="ECO:0007669"/>
    <property type="project" value="InterPro"/>
</dbReference>
<dbReference type="GO" id="GO:0010333">
    <property type="term" value="F:terpene synthase activity"/>
    <property type="evidence" value="ECO:0000314"/>
    <property type="project" value="UniProtKB"/>
</dbReference>
<dbReference type="GO" id="GO:0016102">
    <property type="term" value="P:diterpenoid biosynthetic process"/>
    <property type="evidence" value="ECO:0007669"/>
    <property type="project" value="InterPro"/>
</dbReference>
<dbReference type="GO" id="GO:0010597">
    <property type="term" value="P:green leaf volatile biosynthetic process"/>
    <property type="evidence" value="ECO:0000314"/>
    <property type="project" value="UniProtKB"/>
</dbReference>
<dbReference type="GO" id="GO:0016114">
    <property type="term" value="P:terpenoid biosynthetic process"/>
    <property type="evidence" value="ECO:0000314"/>
    <property type="project" value="UniProtKB"/>
</dbReference>
<dbReference type="CDD" id="cd00684">
    <property type="entry name" value="Terpene_cyclase_plant_C1"/>
    <property type="match status" value="1"/>
</dbReference>
<dbReference type="FunFam" id="1.50.10.130:FF:000002">
    <property type="entry name" value="Ent-copalyl diphosphate synthase, chloroplastic"/>
    <property type="match status" value="1"/>
</dbReference>
<dbReference type="FunFam" id="1.10.600.10:FF:000005">
    <property type="entry name" value="Ent-kaur-16-ene synthase, chloroplastic"/>
    <property type="match status" value="1"/>
</dbReference>
<dbReference type="Gene3D" id="1.10.600.10">
    <property type="entry name" value="Farnesyl Diphosphate Synthase"/>
    <property type="match status" value="1"/>
</dbReference>
<dbReference type="Gene3D" id="1.50.10.130">
    <property type="entry name" value="Terpene synthase, N-terminal domain"/>
    <property type="match status" value="1"/>
</dbReference>
<dbReference type="InterPro" id="IPR008949">
    <property type="entry name" value="Isoprenoid_synthase_dom_sf"/>
</dbReference>
<dbReference type="InterPro" id="IPR034741">
    <property type="entry name" value="Terpene_cyclase-like_1_C"/>
</dbReference>
<dbReference type="InterPro" id="IPR044814">
    <property type="entry name" value="Terpene_cyclase_plant_C1"/>
</dbReference>
<dbReference type="InterPro" id="IPR001906">
    <property type="entry name" value="Terpene_synth_N"/>
</dbReference>
<dbReference type="InterPro" id="IPR036965">
    <property type="entry name" value="Terpene_synth_N_sf"/>
</dbReference>
<dbReference type="InterPro" id="IPR050148">
    <property type="entry name" value="Terpene_synthase-like"/>
</dbReference>
<dbReference type="InterPro" id="IPR005630">
    <property type="entry name" value="Terpene_synthase_metal-bd"/>
</dbReference>
<dbReference type="InterPro" id="IPR008930">
    <property type="entry name" value="Terpenoid_cyclase/PrenylTrfase"/>
</dbReference>
<dbReference type="PANTHER" id="PTHR31739:SF25">
    <property type="entry name" value="(E,E)-GERANYLLINALOOL SYNTHASE"/>
    <property type="match status" value="1"/>
</dbReference>
<dbReference type="PANTHER" id="PTHR31739">
    <property type="entry name" value="ENT-COPALYL DIPHOSPHATE SYNTHASE, CHLOROPLASTIC"/>
    <property type="match status" value="1"/>
</dbReference>
<dbReference type="Pfam" id="PF01397">
    <property type="entry name" value="Terpene_synth"/>
    <property type="match status" value="1"/>
</dbReference>
<dbReference type="Pfam" id="PF03936">
    <property type="entry name" value="Terpene_synth_C"/>
    <property type="match status" value="1"/>
</dbReference>
<dbReference type="SFLD" id="SFLDS00005">
    <property type="entry name" value="Isoprenoid_Synthase_Type_I"/>
    <property type="match status" value="1"/>
</dbReference>
<dbReference type="SFLD" id="SFLDG01019">
    <property type="entry name" value="Terpene_Cyclase_Like_1_C_Termi"/>
    <property type="match status" value="1"/>
</dbReference>
<dbReference type="SFLD" id="SFLDG01014">
    <property type="entry name" value="Terpene_Cyclase_Like_1_N-term"/>
    <property type="match status" value="1"/>
</dbReference>
<dbReference type="SUPFAM" id="SSF48239">
    <property type="entry name" value="Terpenoid cyclases/Protein prenyltransferases"/>
    <property type="match status" value="1"/>
</dbReference>
<dbReference type="SUPFAM" id="SSF48576">
    <property type="entry name" value="Terpenoid synthases"/>
    <property type="match status" value="1"/>
</dbReference>
<name>BPHL1_PINBN</name>
<protein>
    <recommendedName>
        <fullName evidence="5">(-)-beta-phellandrene synthase 1, chloroplastic</fullName>
        <ecNumber evidence="4">4.2.3.52</ecNumber>
    </recommendedName>
    <alternativeName>
        <fullName evidence="5">Terpene synthase (-)betaphell1</fullName>
        <shortName evidence="5">PbTPS-(-)betaphell1</shortName>
    </alternativeName>
</protein>
<comment type="function">
    <text evidence="4">Monoterpene synthase (TPS) involved in the biosynthesis of monoterpene natural products included in conifer oleoresin secretions and volatile emissions; these compounds contribute to biotic and abiotic stress defense against herbivores and pathogens (PubMed:23679205). Catalyzes the conversion of (2E)-geranyl diphosphate (GPP) to (-)-beta-phellandrene (PubMed:23679205).</text>
</comment>
<comment type="catalytic activity">
    <reaction evidence="4">
        <text>(2E)-geranyl diphosphate = (-)-beta-phellandrene + diphosphate</text>
        <dbReference type="Rhea" id="RHEA:25492"/>
        <dbReference type="ChEBI" id="CHEBI:129"/>
        <dbReference type="ChEBI" id="CHEBI:33019"/>
        <dbReference type="ChEBI" id="CHEBI:58057"/>
        <dbReference type="EC" id="4.2.3.52"/>
    </reaction>
    <physiologicalReaction direction="left-to-right" evidence="4">
        <dbReference type="Rhea" id="RHEA:25493"/>
    </physiologicalReaction>
</comment>
<comment type="cofactor">
    <cofactor evidence="1">
        <name>Mg(2+)</name>
        <dbReference type="ChEBI" id="CHEBI:18420"/>
    </cofactor>
    <cofactor evidence="1">
        <name>Mn(2+)</name>
        <dbReference type="ChEBI" id="CHEBI:29035"/>
    </cofactor>
    <text evidence="1">Binds 3 Mg(2+) or Mn(2+) ions per subunit.</text>
</comment>
<comment type="pathway">
    <text evidence="4">Terpene metabolism; oleoresin biosynthesis.</text>
</comment>
<comment type="pathway">
    <text evidence="4">Secondary metabolite biosynthesis; terpenoid biosynthesis.</text>
</comment>
<comment type="subcellular location">
    <subcellularLocation>
        <location evidence="3">Plastid</location>
        <location evidence="3">Chloroplast</location>
    </subcellularLocation>
</comment>
<comment type="domain">
    <text evidence="6">The Asp-Asp-Xaa-Xaa-Asp/Glu (DDXXD/E) motif is important for the catalytic activity, presumably through binding to Mg(2+).</text>
</comment>
<comment type="similarity">
    <text evidence="6">Belongs to the terpene synthase family. Tpsd subfamily.</text>
</comment>